<accession>O84816</accession>
<name>RL32_CHLTR</name>
<proteinExistence type="inferred from homology"/>
<evidence type="ECO:0000250" key="1"/>
<evidence type="ECO:0000256" key="2">
    <source>
        <dbReference type="SAM" id="MobiDB-lite"/>
    </source>
</evidence>
<evidence type="ECO:0000305" key="3"/>
<comment type="similarity">
    <text evidence="3">Belongs to the bacterial ribosomal protein bL32 family.</text>
</comment>
<sequence length="59" mass="6484">MAVPRNRHSNARKNIRRSHHAKKACSAAVCSNCKQAFIPHTVCASCGFYKGKAVITVEK</sequence>
<keyword id="KW-1185">Reference proteome</keyword>
<keyword id="KW-0687">Ribonucleoprotein</keyword>
<keyword id="KW-0689">Ribosomal protein</keyword>
<reference key="1">
    <citation type="journal article" date="1998" name="Science">
        <title>Genome sequence of an obligate intracellular pathogen of humans: Chlamydia trachomatis.</title>
        <authorList>
            <person name="Stephens R.S."/>
            <person name="Kalman S."/>
            <person name="Lammel C.J."/>
            <person name="Fan J."/>
            <person name="Marathe R."/>
            <person name="Aravind L."/>
            <person name="Mitchell W.P."/>
            <person name="Olinger L."/>
            <person name="Tatusov R.L."/>
            <person name="Zhao Q."/>
            <person name="Koonin E.V."/>
            <person name="Davis R.W."/>
        </authorList>
    </citation>
    <scope>NUCLEOTIDE SEQUENCE [LARGE SCALE GENOMIC DNA]</scope>
    <source>
        <strain>ATCC VR-885 / DSM 19411 / UW-3/Cx</strain>
    </source>
</reference>
<organism>
    <name type="scientific">Chlamydia trachomatis serovar D (strain ATCC VR-885 / DSM 19411 / UW-3/Cx)</name>
    <dbReference type="NCBI Taxonomy" id="272561"/>
    <lineage>
        <taxon>Bacteria</taxon>
        <taxon>Pseudomonadati</taxon>
        <taxon>Chlamydiota</taxon>
        <taxon>Chlamydiia</taxon>
        <taxon>Chlamydiales</taxon>
        <taxon>Chlamydiaceae</taxon>
        <taxon>Chlamydia/Chlamydophila group</taxon>
        <taxon>Chlamydia</taxon>
    </lineage>
</organism>
<dbReference type="EMBL" id="AE001273">
    <property type="protein sequence ID" value="AAC68406.1"/>
    <property type="molecule type" value="Genomic_DNA"/>
</dbReference>
<dbReference type="PIR" id="F71468">
    <property type="entry name" value="F71468"/>
</dbReference>
<dbReference type="RefSeq" id="NP_220330.1">
    <property type="nucleotide sequence ID" value="NC_000117.1"/>
</dbReference>
<dbReference type="RefSeq" id="WP_009872193.1">
    <property type="nucleotide sequence ID" value="NC_000117.1"/>
</dbReference>
<dbReference type="SMR" id="O84816"/>
<dbReference type="STRING" id="272561.CT_810"/>
<dbReference type="EnsemblBacteria" id="AAC68406">
    <property type="protein sequence ID" value="AAC68406"/>
    <property type="gene ID" value="CT_810"/>
</dbReference>
<dbReference type="GeneID" id="884612"/>
<dbReference type="KEGG" id="ctr:CT_810"/>
<dbReference type="PATRIC" id="fig|272561.5.peg.893"/>
<dbReference type="HOGENOM" id="CLU_129084_1_3_0"/>
<dbReference type="InParanoid" id="O84816"/>
<dbReference type="OrthoDB" id="9812874at2"/>
<dbReference type="Proteomes" id="UP000000431">
    <property type="component" value="Chromosome"/>
</dbReference>
<dbReference type="GO" id="GO:0022625">
    <property type="term" value="C:cytosolic large ribosomal subunit"/>
    <property type="evidence" value="ECO:0000318"/>
    <property type="project" value="GO_Central"/>
</dbReference>
<dbReference type="GO" id="GO:0003735">
    <property type="term" value="F:structural constituent of ribosome"/>
    <property type="evidence" value="ECO:0000318"/>
    <property type="project" value="GO_Central"/>
</dbReference>
<dbReference type="GO" id="GO:0006412">
    <property type="term" value="P:translation"/>
    <property type="evidence" value="ECO:0007669"/>
    <property type="project" value="UniProtKB-UniRule"/>
</dbReference>
<dbReference type="HAMAP" id="MF_00340">
    <property type="entry name" value="Ribosomal_bL32"/>
    <property type="match status" value="1"/>
</dbReference>
<dbReference type="InterPro" id="IPR002677">
    <property type="entry name" value="Ribosomal_bL32"/>
</dbReference>
<dbReference type="InterPro" id="IPR044957">
    <property type="entry name" value="Ribosomal_bL32_bact"/>
</dbReference>
<dbReference type="InterPro" id="IPR011332">
    <property type="entry name" value="Ribosomal_zn-bd"/>
</dbReference>
<dbReference type="NCBIfam" id="TIGR01031">
    <property type="entry name" value="rpmF_bact"/>
    <property type="match status" value="1"/>
</dbReference>
<dbReference type="PANTHER" id="PTHR35534">
    <property type="entry name" value="50S RIBOSOMAL PROTEIN L32"/>
    <property type="match status" value="1"/>
</dbReference>
<dbReference type="PANTHER" id="PTHR35534:SF1">
    <property type="entry name" value="LARGE RIBOSOMAL SUBUNIT PROTEIN BL32"/>
    <property type="match status" value="1"/>
</dbReference>
<dbReference type="Pfam" id="PF01783">
    <property type="entry name" value="Ribosomal_L32p"/>
    <property type="match status" value="1"/>
</dbReference>
<dbReference type="SUPFAM" id="SSF57829">
    <property type="entry name" value="Zn-binding ribosomal proteins"/>
    <property type="match status" value="1"/>
</dbReference>
<feature type="initiator methionine" description="Removed" evidence="1">
    <location>
        <position position="1"/>
    </location>
</feature>
<feature type="chain" id="PRO_0000172329" description="Large ribosomal subunit protein bL32">
    <location>
        <begin position="2"/>
        <end position="59"/>
    </location>
</feature>
<feature type="region of interest" description="Disordered" evidence="2">
    <location>
        <begin position="1"/>
        <end position="20"/>
    </location>
</feature>
<gene>
    <name type="primary">rpmF</name>
    <name type="synonym">rl32</name>
    <name type="ordered locus">CT_810</name>
</gene>
<protein>
    <recommendedName>
        <fullName evidence="3">Large ribosomal subunit protein bL32</fullName>
    </recommendedName>
    <alternativeName>
        <fullName>50S ribosomal protein L32</fullName>
    </alternativeName>
</protein>